<gene>
    <name evidence="1" type="primary">argP</name>
    <name type="synonym">iciA</name>
    <name type="ordered locus">CKO_04281</name>
</gene>
<keyword id="KW-0238">DNA-binding</keyword>
<keyword id="KW-1185">Reference proteome</keyword>
<keyword id="KW-0804">Transcription</keyword>
<keyword id="KW-0805">Transcription regulation</keyword>
<dbReference type="EMBL" id="CP000822">
    <property type="protein sequence ID" value="ABV15338.1"/>
    <property type="molecule type" value="Genomic_DNA"/>
</dbReference>
<dbReference type="RefSeq" id="WP_012135021.1">
    <property type="nucleotide sequence ID" value="NC_009792.1"/>
</dbReference>
<dbReference type="SMR" id="A8APC5"/>
<dbReference type="STRING" id="290338.CKO_04281"/>
<dbReference type="GeneID" id="45137879"/>
<dbReference type="KEGG" id="cko:CKO_04281"/>
<dbReference type="HOGENOM" id="CLU_063829_0_0_6"/>
<dbReference type="OrthoDB" id="3252676at2"/>
<dbReference type="Proteomes" id="UP000008148">
    <property type="component" value="Chromosome"/>
</dbReference>
<dbReference type="GO" id="GO:0003677">
    <property type="term" value="F:DNA binding"/>
    <property type="evidence" value="ECO:0007669"/>
    <property type="project" value="UniProtKB-UniRule"/>
</dbReference>
<dbReference type="GO" id="GO:0003700">
    <property type="term" value="F:DNA-binding transcription factor activity"/>
    <property type="evidence" value="ECO:0007669"/>
    <property type="project" value="UniProtKB-UniRule"/>
</dbReference>
<dbReference type="CDD" id="cd08428">
    <property type="entry name" value="PBP2_IciA_ArgP"/>
    <property type="match status" value="1"/>
</dbReference>
<dbReference type="FunFam" id="1.10.10.10:FF:000061">
    <property type="entry name" value="HTH-type transcriptional regulator ArgP"/>
    <property type="match status" value="1"/>
</dbReference>
<dbReference type="FunFam" id="3.40.190.290:FF:000002">
    <property type="entry name" value="HTH-type transcriptional regulator ArgP"/>
    <property type="match status" value="1"/>
</dbReference>
<dbReference type="Gene3D" id="3.40.190.290">
    <property type="match status" value="1"/>
</dbReference>
<dbReference type="Gene3D" id="1.10.10.10">
    <property type="entry name" value="Winged helix-like DNA-binding domain superfamily/Winged helix DNA-binding domain"/>
    <property type="match status" value="1"/>
</dbReference>
<dbReference type="HAMAP" id="MF_00513">
    <property type="entry name" value="HTH_type_ArgP"/>
    <property type="match status" value="1"/>
</dbReference>
<dbReference type="InterPro" id="IPR017685">
    <property type="entry name" value="ArgP"/>
</dbReference>
<dbReference type="InterPro" id="IPR023490">
    <property type="entry name" value="ArgP_gammaproteobact"/>
</dbReference>
<dbReference type="InterPro" id="IPR050176">
    <property type="entry name" value="LTTR"/>
</dbReference>
<dbReference type="InterPro" id="IPR005119">
    <property type="entry name" value="LysR_subst-bd"/>
</dbReference>
<dbReference type="InterPro" id="IPR000847">
    <property type="entry name" value="Tscrpt_reg_HTH_LysR"/>
</dbReference>
<dbReference type="InterPro" id="IPR036388">
    <property type="entry name" value="WH-like_DNA-bd_sf"/>
</dbReference>
<dbReference type="InterPro" id="IPR036390">
    <property type="entry name" value="WH_DNA-bd_sf"/>
</dbReference>
<dbReference type="NCBIfam" id="TIGR03298">
    <property type="entry name" value="argP"/>
    <property type="match status" value="1"/>
</dbReference>
<dbReference type="NCBIfam" id="NF002964">
    <property type="entry name" value="PRK03635.1"/>
    <property type="match status" value="1"/>
</dbReference>
<dbReference type="NCBIfam" id="NF009888">
    <property type="entry name" value="PRK13348.1"/>
    <property type="match status" value="1"/>
</dbReference>
<dbReference type="PANTHER" id="PTHR30579:SF2">
    <property type="entry name" value="HTH-TYPE TRANSCRIPTIONAL REGULATOR ARGP"/>
    <property type="match status" value="1"/>
</dbReference>
<dbReference type="PANTHER" id="PTHR30579">
    <property type="entry name" value="TRANSCRIPTIONAL REGULATOR"/>
    <property type="match status" value="1"/>
</dbReference>
<dbReference type="Pfam" id="PF00126">
    <property type="entry name" value="HTH_1"/>
    <property type="match status" value="1"/>
</dbReference>
<dbReference type="Pfam" id="PF03466">
    <property type="entry name" value="LysR_substrate"/>
    <property type="match status" value="1"/>
</dbReference>
<dbReference type="PRINTS" id="PR00039">
    <property type="entry name" value="HTHLYSR"/>
</dbReference>
<dbReference type="SUPFAM" id="SSF53850">
    <property type="entry name" value="Periplasmic binding protein-like II"/>
    <property type="match status" value="1"/>
</dbReference>
<dbReference type="SUPFAM" id="SSF46785">
    <property type="entry name" value="Winged helix' DNA-binding domain"/>
    <property type="match status" value="1"/>
</dbReference>
<dbReference type="PROSITE" id="PS50931">
    <property type="entry name" value="HTH_LYSR"/>
    <property type="match status" value="1"/>
</dbReference>
<evidence type="ECO:0000255" key="1">
    <source>
        <dbReference type="HAMAP-Rule" id="MF_00513"/>
    </source>
</evidence>
<evidence type="ECO:0000305" key="2"/>
<organism>
    <name type="scientific">Citrobacter koseri (strain ATCC BAA-895 / CDC 4225-83 / SGSC4696)</name>
    <dbReference type="NCBI Taxonomy" id="290338"/>
    <lineage>
        <taxon>Bacteria</taxon>
        <taxon>Pseudomonadati</taxon>
        <taxon>Pseudomonadota</taxon>
        <taxon>Gammaproteobacteria</taxon>
        <taxon>Enterobacterales</taxon>
        <taxon>Enterobacteriaceae</taxon>
        <taxon>Citrobacter</taxon>
    </lineage>
</organism>
<protein>
    <recommendedName>
        <fullName evidence="1">HTH-type transcriptional regulator ArgP</fullName>
    </recommendedName>
</protein>
<reference key="1">
    <citation type="submission" date="2007-08" db="EMBL/GenBank/DDBJ databases">
        <authorList>
            <consortium name="The Citrobacter koseri Genome Sequencing Project"/>
            <person name="McClelland M."/>
            <person name="Sanderson E.K."/>
            <person name="Porwollik S."/>
            <person name="Spieth J."/>
            <person name="Clifton W.S."/>
            <person name="Latreille P."/>
            <person name="Courtney L."/>
            <person name="Wang C."/>
            <person name="Pepin K."/>
            <person name="Bhonagiri V."/>
            <person name="Nash W."/>
            <person name="Johnson M."/>
            <person name="Thiruvilangam P."/>
            <person name="Wilson R."/>
        </authorList>
    </citation>
    <scope>NUCLEOTIDE SEQUENCE [LARGE SCALE GENOMIC DNA]</scope>
    <source>
        <strain>ATCC BAA-895 / CDC 4225-83 / SGSC4696</strain>
    </source>
</reference>
<comment type="function">
    <text evidence="1">Controls the transcription of genes involved in arginine and lysine metabolism.</text>
</comment>
<comment type="subunit">
    <text evidence="1">Homodimer.</text>
</comment>
<comment type="similarity">
    <text evidence="2">Belongs to the LysR transcriptional regulatory family.</text>
</comment>
<feature type="chain" id="PRO_1000060874" description="HTH-type transcriptional regulator ArgP">
    <location>
        <begin position="1"/>
        <end position="297"/>
    </location>
</feature>
<feature type="domain" description="HTH lysR-type" evidence="1">
    <location>
        <begin position="4"/>
        <end position="60"/>
    </location>
</feature>
<feature type="DNA-binding region" description="H-T-H motif" evidence="1">
    <location>
        <begin position="21"/>
        <end position="40"/>
    </location>
</feature>
<proteinExistence type="inferred from homology"/>
<accession>A8APC5</accession>
<sequence>MKRPDYRTLQALDAVIRERGFERAAQKLCITQSAVSQRIKQLENMFGQPLLVRTVPPRPTEQGQKLLALLRQVELLEDEWLGDEQTGSTPLLLSLAVNADSLATWLLPALAPVLADSPIRLNLQVEDETRTQERLRRGEVVGAVSIQHQALPSCLVDKLGALDYLFVGSKPFAERYFPNGVTRSALLKAPAVAFDHLDDMHQAFLQQNFDLPPGSVPCHIVNSSEAFVQLARQGTTCCMIPHLQIEKELESGELIDLTPGLFQRRMLYWHRFAPESRMMRNVTDALLEYGHKVLRQD</sequence>
<name>ARGP_CITK8</name>